<organism>
    <name type="scientific">Paracidovorax citrulli (strain AAC00-1)</name>
    <name type="common">Acidovorax citrulli</name>
    <dbReference type="NCBI Taxonomy" id="397945"/>
    <lineage>
        <taxon>Bacteria</taxon>
        <taxon>Pseudomonadati</taxon>
        <taxon>Pseudomonadota</taxon>
        <taxon>Betaproteobacteria</taxon>
        <taxon>Burkholderiales</taxon>
        <taxon>Comamonadaceae</taxon>
        <taxon>Paracidovorax</taxon>
    </lineage>
</organism>
<accession>A1TND7</accession>
<feature type="chain" id="PRO_1000050402" description="Putative pterin-4-alpha-carbinolamine dehydratase">
    <location>
        <begin position="1"/>
        <end position="116"/>
    </location>
</feature>
<protein>
    <recommendedName>
        <fullName evidence="1">Putative pterin-4-alpha-carbinolamine dehydratase</fullName>
        <shortName evidence="1">PHS</shortName>
        <ecNumber evidence="1">4.2.1.96</ecNumber>
    </recommendedName>
    <alternativeName>
        <fullName evidence="1">4-alpha-hydroxy-tetrahydropterin dehydratase</fullName>
    </alternativeName>
    <alternativeName>
        <fullName evidence="1">Pterin carbinolamine dehydratase</fullName>
        <shortName evidence="1">PCD</shortName>
    </alternativeName>
</protein>
<evidence type="ECO:0000255" key="1">
    <source>
        <dbReference type="HAMAP-Rule" id="MF_00434"/>
    </source>
</evidence>
<name>PHS_PARC0</name>
<proteinExistence type="inferred from homology"/>
<reference key="1">
    <citation type="submission" date="2006-12" db="EMBL/GenBank/DDBJ databases">
        <title>Complete sequence of Acidovorax avenae subsp. citrulli AAC00-1.</title>
        <authorList>
            <person name="Copeland A."/>
            <person name="Lucas S."/>
            <person name="Lapidus A."/>
            <person name="Barry K."/>
            <person name="Detter J.C."/>
            <person name="Glavina del Rio T."/>
            <person name="Dalin E."/>
            <person name="Tice H."/>
            <person name="Pitluck S."/>
            <person name="Kiss H."/>
            <person name="Brettin T."/>
            <person name="Bruce D."/>
            <person name="Han C."/>
            <person name="Tapia R."/>
            <person name="Gilna P."/>
            <person name="Schmutz J."/>
            <person name="Larimer F."/>
            <person name="Land M."/>
            <person name="Hauser L."/>
            <person name="Kyrpides N."/>
            <person name="Kim E."/>
            <person name="Stahl D."/>
            <person name="Richardson P."/>
        </authorList>
    </citation>
    <scope>NUCLEOTIDE SEQUENCE [LARGE SCALE GENOMIC DNA]</scope>
    <source>
        <strain>AAC00-1</strain>
    </source>
</reference>
<comment type="catalytic activity">
    <reaction evidence="1">
        <text>(4aS,6R)-4a-hydroxy-L-erythro-5,6,7,8-tetrahydrobiopterin = (6R)-L-erythro-6,7-dihydrobiopterin + H2O</text>
        <dbReference type="Rhea" id="RHEA:11920"/>
        <dbReference type="ChEBI" id="CHEBI:15377"/>
        <dbReference type="ChEBI" id="CHEBI:15642"/>
        <dbReference type="ChEBI" id="CHEBI:43120"/>
        <dbReference type="EC" id="4.2.1.96"/>
    </reaction>
</comment>
<comment type="similarity">
    <text evidence="1">Belongs to the pterin-4-alpha-carbinolamine dehydratase family.</text>
</comment>
<sequence length="116" mass="12759">MTSSSMLTKKDWSAHARRALSPTEIVTRLADLQGWALSGDGAAVAIEKTYRFANYYETISFVNAVAFIANAQDHHPDLSVHYDRCVVRLNTHDVKGISTTDLECAARFDALLAASE</sequence>
<dbReference type="EC" id="4.2.1.96" evidence="1"/>
<dbReference type="EMBL" id="CP000512">
    <property type="protein sequence ID" value="ABM32475.1"/>
    <property type="molecule type" value="Genomic_DNA"/>
</dbReference>
<dbReference type="RefSeq" id="WP_011795020.1">
    <property type="nucleotide sequence ID" value="NC_008752.1"/>
</dbReference>
<dbReference type="SMR" id="A1TND7"/>
<dbReference type="STRING" id="397945.Aave_1891"/>
<dbReference type="KEGG" id="aav:Aave_1891"/>
<dbReference type="eggNOG" id="COG2154">
    <property type="taxonomic scope" value="Bacteria"/>
</dbReference>
<dbReference type="HOGENOM" id="CLU_081974_2_1_4"/>
<dbReference type="OrthoDB" id="9794987at2"/>
<dbReference type="Proteomes" id="UP000002596">
    <property type="component" value="Chromosome"/>
</dbReference>
<dbReference type="GO" id="GO:0008124">
    <property type="term" value="F:4-alpha-hydroxytetrahydrobiopterin dehydratase activity"/>
    <property type="evidence" value="ECO:0007669"/>
    <property type="project" value="UniProtKB-UniRule"/>
</dbReference>
<dbReference type="GO" id="GO:0006729">
    <property type="term" value="P:tetrahydrobiopterin biosynthetic process"/>
    <property type="evidence" value="ECO:0007669"/>
    <property type="project" value="InterPro"/>
</dbReference>
<dbReference type="Gene3D" id="3.30.1360.20">
    <property type="entry name" value="Transcriptional coactivator/pterin dehydratase"/>
    <property type="match status" value="1"/>
</dbReference>
<dbReference type="HAMAP" id="MF_00434">
    <property type="entry name" value="Pterin_4_alpha"/>
    <property type="match status" value="1"/>
</dbReference>
<dbReference type="InterPro" id="IPR036428">
    <property type="entry name" value="PCD_sf"/>
</dbReference>
<dbReference type="InterPro" id="IPR001533">
    <property type="entry name" value="Pterin_deHydtase"/>
</dbReference>
<dbReference type="NCBIfam" id="NF002017">
    <property type="entry name" value="PRK00823.1-2"/>
    <property type="match status" value="1"/>
</dbReference>
<dbReference type="PANTHER" id="PTHR12599">
    <property type="entry name" value="PTERIN-4-ALPHA-CARBINOLAMINE DEHYDRATASE"/>
    <property type="match status" value="1"/>
</dbReference>
<dbReference type="PANTHER" id="PTHR12599:SF0">
    <property type="entry name" value="PTERIN-4-ALPHA-CARBINOLAMINE DEHYDRATASE"/>
    <property type="match status" value="1"/>
</dbReference>
<dbReference type="Pfam" id="PF01329">
    <property type="entry name" value="Pterin_4a"/>
    <property type="match status" value="1"/>
</dbReference>
<dbReference type="SUPFAM" id="SSF55248">
    <property type="entry name" value="PCD-like"/>
    <property type="match status" value="1"/>
</dbReference>
<keyword id="KW-0456">Lyase</keyword>
<gene>
    <name type="ordered locus">Aave_1891</name>
</gene>